<feature type="chain" id="PRO_0000265642" description="Elongation factor 4">
    <location>
        <begin position="1"/>
        <end position="602"/>
    </location>
</feature>
<feature type="domain" description="tr-type G">
    <location>
        <begin position="6"/>
        <end position="188"/>
    </location>
</feature>
<feature type="binding site" evidence="1">
    <location>
        <begin position="18"/>
        <end position="23"/>
    </location>
    <ligand>
        <name>GTP</name>
        <dbReference type="ChEBI" id="CHEBI:37565"/>
    </ligand>
</feature>
<feature type="binding site" evidence="1">
    <location>
        <begin position="135"/>
        <end position="138"/>
    </location>
    <ligand>
        <name>GTP</name>
        <dbReference type="ChEBI" id="CHEBI:37565"/>
    </ligand>
</feature>
<protein>
    <recommendedName>
        <fullName evidence="1">Elongation factor 4</fullName>
        <shortName evidence="1">EF-4</shortName>
        <ecNumber evidence="1">3.6.5.n1</ecNumber>
    </recommendedName>
    <alternativeName>
        <fullName evidence="1">Ribosomal back-translocase LepA</fullName>
    </alternativeName>
</protein>
<organism>
    <name type="scientific">Brucella abortus (strain 2308)</name>
    <dbReference type="NCBI Taxonomy" id="359391"/>
    <lineage>
        <taxon>Bacteria</taxon>
        <taxon>Pseudomonadati</taxon>
        <taxon>Pseudomonadota</taxon>
        <taxon>Alphaproteobacteria</taxon>
        <taxon>Hyphomicrobiales</taxon>
        <taxon>Brucellaceae</taxon>
        <taxon>Brucella/Ochrobactrum group</taxon>
        <taxon>Brucella</taxon>
    </lineage>
</organism>
<reference key="1">
    <citation type="journal article" date="2005" name="Infect. Immun.">
        <title>Whole-genome analyses of speciation events in pathogenic Brucellae.</title>
        <authorList>
            <person name="Chain P.S."/>
            <person name="Comerci D.J."/>
            <person name="Tolmasky M.E."/>
            <person name="Larimer F.W."/>
            <person name="Malfatti S.A."/>
            <person name="Vergez L.M."/>
            <person name="Aguero F."/>
            <person name="Land M.L."/>
            <person name="Ugalde R.A."/>
            <person name="Garcia E."/>
        </authorList>
    </citation>
    <scope>NUCLEOTIDE SEQUENCE [LARGE SCALE GENOMIC DNA]</scope>
    <source>
        <strain>2308</strain>
    </source>
</reference>
<keyword id="KW-0997">Cell inner membrane</keyword>
<keyword id="KW-1003">Cell membrane</keyword>
<keyword id="KW-0342">GTP-binding</keyword>
<keyword id="KW-0378">Hydrolase</keyword>
<keyword id="KW-0472">Membrane</keyword>
<keyword id="KW-0547">Nucleotide-binding</keyword>
<keyword id="KW-0648">Protein biosynthesis</keyword>
<keyword id="KW-1185">Reference proteome</keyword>
<accession>Q2YJP8</accession>
<proteinExistence type="inferred from homology"/>
<name>LEPA_BRUA2</name>
<gene>
    <name evidence="1" type="primary">lepA</name>
    <name type="ordered locus">BAB2_1001</name>
</gene>
<evidence type="ECO:0000255" key="1">
    <source>
        <dbReference type="HAMAP-Rule" id="MF_00071"/>
    </source>
</evidence>
<comment type="function">
    <text evidence="1">Required for accurate and efficient protein synthesis under certain stress conditions. May act as a fidelity factor of the translation reaction, by catalyzing a one-codon backward translocation of tRNAs on improperly translocated ribosomes. Back-translocation proceeds from a post-translocation (POST) complex to a pre-translocation (PRE) complex, thus giving elongation factor G a second chance to translocate the tRNAs correctly. Binds to ribosomes in a GTP-dependent manner.</text>
</comment>
<comment type="catalytic activity">
    <reaction evidence="1">
        <text>GTP + H2O = GDP + phosphate + H(+)</text>
        <dbReference type="Rhea" id="RHEA:19669"/>
        <dbReference type="ChEBI" id="CHEBI:15377"/>
        <dbReference type="ChEBI" id="CHEBI:15378"/>
        <dbReference type="ChEBI" id="CHEBI:37565"/>
        <dbReference type="ChEBI" id="CHEBI:43474"/>
        <dbReference type="ChEBI" id="CHEBI:58189"/>
        <dbReference type="EC" id="3.6.5.n1"/>
    </reaction>
</comment>
<comment type="subcellular location">
    <subcellularLocation>
        <location evidence="1">Cell inner membrane</location>
        <topology evidence="1">Peripheral membrane protein</topology>
        <orientation evidence="1">Cytoplasmic side</orientation>
    </subcellularLocation>
</comment>
<comment type="similarity">
    <text evidence="1">Belongs to the TRAFAC class translation factor GTPase superfamily. Classic translation factor GTPase family. LepA subfamily.</text>
</comment>
<sequence>MSTPLDHIRNFSIVAHIDHGKSTLADRLIQLTGGLDTREMKDQVLDSMDIERERGITIKAQTVRLSYKAKNGEDYVLNLIDTPGHVDFAYEVSRSLAACEGSLLVVDASQGVEAQTLANVYQAIDNNHEIVVVLNKIDLPAAEPERVKQQIEEVIGIDASDAVEISAKTGLGIEDVLEAIVNKLPAPKEGDRNAPLKAMLVDSWYDSYLGVIVLVRVIDGVLKKGQTIRMMGTGAKYPVERTGVFTPKMVQVDDLGPGELGFITASIKEVADTRVGDTITEDRRPTENILSGFKPAQPVVFCGLFPVDAADFEDLRGAMGKLRLNDASFSFEMETSAALGFGFRCGFLGLLHLEIIQERLEREFNLDLITTAPSVVYRLNMTDGTHKELHNPADMPDVVKIASIEEPWIKATIMTPDDYLGAIMKLCQERRGIQIDLTYVGPRAMITYDLPLNEVVFDFYDRLKSISKGYASFDYNLSDYREGDLVKMSILVNEEPVDALSMLVHRSAAEKRGRALCEKLKELIPQHMFKIPIQAAIGGRIVARETISALRKDVTAKCYGGDVTRKRKLLEKQKESKKRMRQFGKVEIPQEAFIQALKMGDD</sequence>
<dbReference type="EC" id="3.6.5.n1" evidence="1"/>
<dbReference type="EMBL" id="AM040265">
    <property type="protein sequence ID" value="CAJ13167.1"/>
    <property type="molecule type" value="Genomic_DNA"/>
</dbReference>
<dbReference type="RefSeq" id="WP_002967379.1">
    <property type="nucleotide sequence ID" value="NZ_KN046823.1"/>
</dbReference>
<dbReference type="SMR" id="Q2YJP8"/>
<dbReference type="STRING" id="359391.BAB2_1001"/>
<dbReference type="GeneID" id="93015178"/>
<dbReference type="KEGG" id="bmf:BAB2_1001"/>
<dbReference type="PATRIC" id="fig|359391.11.peg.688"/>
<dbReference type="HOGENOM" id="CLU_009995_3_3_5"/>
<dbReference type="PhylomeDB" id="Q2YJP8"/>
<dbReference type="Proteomes" id="UP000002719">
    <property type="component" value="Chromosome II"/>
</dbReference>
<dbReference type="GO" id="GO:0005886">
    <property type="term" value="C:plasma membrane"/>
    <property type="evidence" value="ECO:0007669"/>
    <property type="project" value="UniProtKB-SubCell"/>
</dbReference>
<dbReference type="GO" id="GO:0005525">
    <property type="term" value="F:GTP binding"/>
    <property type="evidence" value="ECO:0007669"/>
    <property type="project" value="UniProtKB-UniRule"/>
</dbReference>
<dbReference type="GO" id="GO:0003924">
    <property type="term" value="F:GTPase activity"/>
    <property type="evidence" value="ECO:0007669"/>
    <property type="project" value="UniProtKB-UniRule"/>
</dbReference>
<dbReference type="GO" id="GO:0097216">
    <property type="term" value="F:guanosine tetraphosphate binding"/>
    <property type="evidence" value="ECO:0007669"/>
    <property type="project" value="UniProtKB-ARBA"/>
</dbReference>
<dbReference type="GO" id="GO:0043022">
    <property type="term" value="F:ribosome binding"/>
    <property type="evidence" value="ECO:0007669"/>
    <property type="project" value="UniProtKB-UniRule"/>
</dbReference>
<dbReference type="GO" id="GO:0003746">
    <property type="term" value="F:translation elongation factor activity"/>
    <property type="evidence" value="ECO:0007669"/>
    <property type="project" value="UniProtKB-UniRule"/>
</dbReference>
<dbReference type="GO" id="GO:0045727">
    <property type="term" value="P:positive regulation of translation"/>
    <property type="evidence" value="ECO:0007669"/>
    <property type="project" value="UniProtKB-UniRule"/>
</dbReference>
<dbReference type="CDD" id="cd03699">
    <property type="entry name" value="EF4_II"/>
    <property type="match status" value="1"/>
</dbReference>
<dbReference type="CDD" id="cd16260">
    <property type="entry name" value="EF4_III"/>
    <property type="match status" value="1"/>
</dbReference>
<dbReference type="CDD" id="cd01890">
    <property type="entry name" value="LepA"/>
    <property type="match status" value="1"/>
</dbReference>
<dbReference type="CDD" id="cd03709">
    <property type="entry name" value="lepA_C"/>
    <property type="match status" value="1"/>
</dbReference>
<dbReference type="FunFam" id="3.40.50.300:FF:000078">
    <property type="entry name" value="Elongation factor 4"/>
    <property type="match status" value="1"/>
</dbReference>
<dbReference type="FunFam" id="2.40.30.10:FF:000015">
    <property type="entry name" value="Translation factor GUF1, mitochondrial"/>
    <property type="match status" value="1"/>
</dbReference>
<dbReference type="FunFam" id="3.30.70.240:FF:000007">
    <property type="entry name" value="Translation factor GUF1, mitochondrial"/>
    <property type="match status" value="1"/>
</dbReference>
<dbReference type="FunFam" id="3.30.70.2570:FF:000001">
    <property type="entry name" value="Translation factor GUF1, mitochondrial"/>
    <property type="match status" value="1"/>
</dbReference>
<dbReference type="FunFam" id="3.30.70.870:FF:000004">
    <property type="entry name" value="Translation factor GUF1, mitochondrial"/>
    <property type="match status" value="1"/>
</dbReference>
<dbReference type="Gene3D" id="3.30.70.240">
    <property type="match status" value="1"/>
</dbReference>
<dbReference type="Gene3D" id="3.30.70.2570">
    <property type="entry name" value="Elongation factor 4, C-terminal domain"/>
    <property type="match status" value="1"/>
</dbReference>
<dbReference type="Gene3D" id="3.30.70.870">
    <property type="entry name" value="Elongation Factor G (Translational Gtpase), domain 3"/>
    <property type="match status" value="1"/>
</dbReference>
<dbReference type="Gene3D" id="3.40.50.300">
    <property type="entry name" value="P-loop containing nucleotide triphosphate hydrolases"/>
    <property type="match status" value="1"/>
</dbReference>
<dbReference type="Gene3D" id="2.40.30.10">
    <property type="entry name" value="Translation factors"/>
    <property type="match status" value="1"/>
</dbReference>
<dbReference type="HAMAP" id="MF_00071">
    <property type="entry name" value="LepA"/>
    <property type="match status" value="1"/>
</dbReference>
<dbReference type="InterPro" id="IPR006297">
    <property type="entry name" value="EF-4"/>
</dbReference>
<dbReference type="InterPro" id="IPR035647">
    <property type="entry name" value="EFG_III/V"/>
</dbReference>
<dbReference type="InterPro" id="IPR000640">
    <property type="entry name" value="EFG_V-like"/>
</dbReference>
<dbReference type="InterPro" id="IPR004161">
    <property type="entry name" value="EFTu-like_2"/>
</dbReference>
<dbReference type="InterPro" id="IPR031157">
    <property type="entry name" value="G_TR_CS"/>
</dbReference>
<dbReference type="InterPro" id="IPR038363">
    <property type="entry name" value="LepA_C_sf"/>
</dbReference>
<dbReference type="InterPro" id="IPR013842">
    <property type="entry name" value="LepA_CTD"/>
</dbReference>
<dbReference type="InterPro" id="IPR035654">
    <property type="entry name" value="LepA_IV"/>
</dbReference>
<dbReference type="InterPro" id="IPR027417">
    <property type="entry name" value="P-loop_NTPase"/>
</dbReference>
<dbReference type="InterPro" id="IPR005225">
    <property type="entry name" value="Small_GTP-bd"/>
</dbReference>
<dbReference type="InterPro" id="IPR000795">
    <property type="entry name" value="T_Tr_GTP-bd_dom"/>
</dbReference>
<dbReference type="NCBIfam" id="TIGR01393">
    <property type="entry name" value="lepA"/>
    <property type="match status" value="1"/>
</dbReference>
<dbReference type="NCBIfam" id="TIGR00231">
    <property type="entry name" value="small_GTP"/>
    <property type="match status" value="1"/>
</dbReference>
<dbReference type="PANTHER" id="PTHR43512:SF4">
    <property type="entry name" value="TRANSLATION FACTOR GUF1 HOMOLOG, CHLOROPLASTIC"/>
    <property type="match status" value="1"/>
</dbReference>
<dbReference type="PANTHER" id="PTHR43512">
    <property type="entry name" value="TRANSLATION FACTOR GUF1-RELATED"/>
    <property type="match status" value="1"/>
</dbReference>
<dbReference type="Pfam" id="PF00679">
    <property type="entry name" value="EFG_C"/>
    <property type="match status" value="1"/>
</dbReference>
<dbReference type="Pfam" id="PF00009">
    <property type="entry name" value="GTP_EFTU"/>
    <property type="match status" value="1"/>
</dbReference>
<dbReference type="Pfam" id="PF03144">
    <property type="entry name" value="GTP_EFTU_D2"/>
    <property type="match status" value="1"/>
</dbReference>
<dbReference type="Pfam" id="PF06421">
    <property type="entry name" value="LepA_C"/>
    <property type="match status" value="1"/>
</dbReference>
<dbReference type="PRINTS" id="PR00315">
    <property type="entry name" value="ELONGATNFCT"/>
</dbReference>
<dbReference type="SMART" id="SM00838">
    <property type="entry name" value="EFG_C"/>
    <property type="match status" value="1"/>
</dbReference>
<dbReference type="SUPFAM" id="SSF54980">
    <property type="entry name" value="EF-G C-terminal domain-like"/>
    <property type="match status" value="2"/>
</dbReference>
<dbReference type="SUPFAM" id="SSF52540">
    <property type="entry name" value="P-loop containing nucleoside triphosphate hydrolases"/>
    <property type="match status" value="1"/>
</dbReference>
<dbReference type="PROSITE" id="PS00301">
    <property type="entry name" value="G_TR_1"/>
    <property type="match status" value="1"/>
</dbReference>
<dbReference type="PROSITE" id="PS51722">
    <property type="entry name" value="G_TR_2"/>
    <property type="match status" value="1"/>
</dbReference>